<accession>P84260</accession>
<accession>P04548</accession>
<keyword id="KW-0027">Amidation</keyword>
<keyword id="KW-0903">Direct protein sequencing</keyword>
<keyword id="KW-0372">Hormone</keyword>
<keyword id="KW-0527">Neuropeptide</keyword>
<keyword id="KW-0873">Pyrrolidone carboxylic acid</keyword>
<keyword id="KW-0964">Secreted</keyword>
<evidence type="ECO:0000269" key="1">
    <source>
    </source>
</evidence>
<evidence type="ECO:0000305" key="2"/>
<name>HTF1_LEPDE</name>
<organism>
    <name type="scientific">Leptinotarsa decemlineata</name>
    <name type="common">Colorado potato beetle</name>
    <name type="synonym">Doryphora decemlineata</name>
    <dbReference type="NCBI Taxonomy" id="7539"/>
    <lineage>
        <taxon>Eukaryota</taxon>
        <taxon>Metazoa</taxon>
        <taxon>Ecdysozoa</taxon>
        <taxon>Arthropoda</taxon>
        <taxon>Hexapoda</taxon>
        <taxon>Insecta</taxon>
        <taxon>Pterygota</taxon>
        <taxon>Neoptera</taxon>
        <taxon>Endopterygota</taxon>
        <taxon>Coleoptera</taxon>
        <taxon>Polyphaga</taxon>
        <taxon>Cucujiformia</taxon>
        <taxon>Chrysomeloidea</taxon>
        <taxon>Chrysomelidae</taxon>
        <taxon>Chrysomelinae</taxon>
        <taxon>Doryphorini</taxon>
        <taxon>Leptinotarsa</taxon>
    </lineage>
</organism>
<feature type="peptide" id="PRO_0000043433" description="Hypertrehalosaemic factor 1">
    <location>
        <begin position="1"/>
        <end position="8"/>
    </location>
</feature>
<feature type="modified residue" description="Pyrrolidone carboxylic acid" evidence="1">
    <location>
        <position position="1"/>
    </location>
</feature>
<feature type="modified residue" description="Tryptophan amide" evidence="1">
    <location>
        <position position="8"/>
    </location>
</feature>
<proteinExistence type="evidence at protein level"/>
<comment type="function">
    <text evidence="1">Hypertrehalosaemic factors are neuropeptides that elevate the level of trehalose in the hemolymph (trehalose is the major carbohydrate in the hemolymph of insects). Involved in the control of amino acid metabolism during flight.</text>
</comment>
<comment type="subcellular location">
    <subcellularLocation>
        <location evidence="1">Secreted</location>
    </subcellularLocation>
</comment>
<comment type="similarity">
    <text evidence="2">Belongs to the AKH/HRTH/RPCH family.</text>
</comment>
<protein>
    <recommendedName>
        <fullName>Hypertrehalosaemic factor 1</fullName>
    </recommendedName>
    <alternativeName>
        <fullName>Hypertrehalosaemic factor I</fullName>
    </alternativeName>
    <alternativeName>
        <fullName>LeD-CC-I</fullName>
    </alternativeName>
</protein>
<reference key="1">
    <citation type="journal article" date="1989" name="Peptides">
        <title>The metabolic neuropeptides of the corpus cardiacum from the potato beetle and the American cockroach are identical.</title>
        <authorList>
            <person name="Gaede G."/>
            <person name="Kellner R."/>
        </authorList>
    </citation>
    <scope>PROTEIN SEQUENCE</scope>
    <scope>FUNCTION</scope>
    <scope>PYROGLUTAMATE FORMATION AT GLN-1</scope>
    <scope>AMIDATION AT TRP-8</scope>
    <scope>SUBCELLULAR LOCATION</scope>
    <source>
        <tissue>Corpora cardiaca</tissue>
    </source>
</reference>
<dbReference type="PIR" id="A44960">
    <property type="entry name" value="A44960"/>
</dbReference>
<dbReference type="GO" id="GO:0005576">
    <property type="term" value="C:extracellular region"/>
    <property type="evidence" value="ECO:0007669"/>
    <property type="project" value="UniProtKB-SubCell"/>
</dbReference>
<dbReference type="GO" id="GO:0005179">
    <property type="term" value="F:hormone activity"/>
    <property type="evidence" value="ECO:0007669"/>
    <property type="project" value="UniProtKB-KW"/>
</dbReference>
<dbReference type="GO" id="GO:0007218">
    <property type="term" value="P:neuropeptide signaling pathway"/>
    <property type="evidence" value="ECO:0007669"/>
    <property type="project" value="UniProtKB-KW"/>
</dbReference>
<dbReference type="InterPro" id="IPR002047">
    <property type="entry name" value="Adipokinetic_hormone_CS"/>
</dbReference>
<dbReference type="PROSITE" id="PS00256">
    <property type="entry name" value="AKH"/>
    <property type="match status" value="1"/>
</dbReference>
<sequence length="8" mass="991">QVNFSPNW</sequence>